<proteinExistence type="inferred from homology"/>
<name>SBI_STAA2</name>
<reference key="1">
    <citation type="submission" date="2007-06" db="EMBL/GenBank/DDBJ databases">
        <title>Complete sequence of chromosome of Staphylococcus aureus subsp. aureus JH1.</title>
        <authorList>
            <consortium name="US DOE Joint Genome Institute"/>
            <person name="Copeland A."/>
            <person name="Lucas S."/>
            <person name="Lapidus A."/>
            <person name="Barry K."/>
            <person name="Detter J.C."/>
            <person name="Glavina del Rio T."/>
            <person name="Hammon N."/>
            <person name="Israni S."/>
            <person name="Dalin E."/>
            <person name="Tice H."/>
            <person name="Pitluck S."/>
            <person name="Chain P."/>
            <person name="Malfatti S."/>
            <person name="Shin M."/>
            <person name="Vergez L."/>
            <person name="Schmutz J."/>
            <person name="Larimer F."/>
            <person name="Land M."/>
            <person name="Hauser L."/>
            <person name="Kyrpides N."/>
            <person name="Ivanova N."/>
            <person name="Tomasz A."/>
            <person name="Richardson P."/>
        </authorList>
    </citation>
    <scope>NUCLEOTIDE SEQUENCE [LARGE SCALE GENOMIC DNA]</scope>
    <source>
        <strain>JH1</strain>
    </source>
</reference>
<sequence>MKNKYISKLLVGAATITLATMISNGEAKASENTQQTSTKHQTTQNNYVTDQQKAFYQVLHLKGITEEQRNQYIKTLREHPERAQEVFSESLKDSKNPDRRVAQQNAFYNVLKNDNLTEQEKNNYIAQIKENPDRSQQVWVESVQSSKAKERQNIENADKAIKDFQDNKAPHDKSAAYEANSKLPKDLRDKNNRFVEKVSIEKAIVRHDERVKSANDAISKLNEKDSIENRRLAQREVNKAPMDVKEHLQKQLDALVAQKDAEKKVAPKVEAPQIQSPQIEKPKAESPKVEVPQIQSPKVEVPQSKLLGYYQSLKDSFNYGYKYLTDTYKSYKEKYDTAKYYYNTYYKYKGAIDQTVLTVLGSGSKSYIQPLKVDDKNGYLAKSYAQVRNYVTESINTGKVLYTFYQNPTLVKTAIKAQETASSIKNTLSNLLSFWK</sequence>
<gene>
    <name type="primary">sbi</name>
    <name type="ordered locus">SaurJH1_2492</name>
</gene>
<keyword id="KW-1003">Cell membrane</keyword>
<keyword id="KW-0390">IgG-binding protein</keyword>
<keyword id="KW-0472">Membrane</keyword>
<keyword id="KW-0677">Repeat</keyword>
<keyword id="KW-0964">Secreted</keyword>
<keyword id="KW-0732">Signal</keyword>
<keyword id="KW-0843">Virulence</keyword>
<comment type="function">
    <text evidence="1">Plays a role in the inhibition of both the innate and adaptive immune responses. Possesses two N-terminal domains that bind the Fc region of IgG and two domains that form a tripartite complex with complement factors C3b and CFH. By recruiting CFH and C3b, the secreted form acts as a potent complement inhibitor of the alternative pathway-mediated lysis.</text>
</comment>
<comment type="subunit">
    <text evidence="1 2">Interacts (via sbi-I and sbi-II domains) with the Fc region of mammalian immunoglobulin G (IgG) proteins. Interacts (via sbi-III and sbi-IV domains) with host complement C3. Interacts (via sbi-III and sbi-IV domains) with host CFH (By similarity). Interacts (via sbi-IV domain) with beta-2-glycoprotein 1/APOH (By similarity).</text>
</comment>
<comment type="subcellular location">
    <subcellularLocation>
        <location evidence="1">Secreted</location>
    </subcellularLocation>
    <subcellularLocation>
        <location evidence="1">Cell membrane</location>
    </subcellularLocation>
    <text evidence="1">Occurs both extracellularly and associated with the cytoplasmic membrane where only the domains I and II are exposed to the extracellular media. Membrane association occurs via binding to lipoteichoic acid.</text>
</comment>
<comment type="domain">
    <text evidence="1">Sbi-I and sbi-II domains provide protection only when anchored to the cell surface, whereas only the secreted sbi-III and sbi-IV domains are biologically active.</text>
</comment>
<comment type="similarity">
    <text evidence="5">Belongs to the immunoglobulin-binding protein Sbi family.</text>
</comment>
<dbReference type="EMBL" id="CP000736">
    <property type="protein sequence ID" value="ABR53316.1"/>
    <property type="molecule type" value="Genomic_DNA"/>
</dbReference>
<dbReference type="SMR" id="A6U4E8"/>
<dbReference type="KEGG" id="sah:SaurJH1_2492"/>
<dbReference type="HOGENOM" id="CLU_051343_0_0_9"/>
<dbReference type="PRO" id="PR:A6U4E8"/>
<dbReference type="GO" id="GO:0005576">
    <property type="term" value="C:extracellular region"/>
    <property type="evidence" value="ECO:0007669"/>
    <property type="project" value="UniProtKB-SubCell"/>
</dbReference>
<dbReference type="GO" id="GO:0005886">
    <property type="term" value="C:plasma membrane"/>
    <property type="evidence" value="ECO:0007669"/>
    <property type="project" value="UniProtKB-SubCell"/>
</dbReference>
<dbReference type="GO" id="GO:0019864">
    <property type="term" value="F:IgG binding"/>
    <property type="evidence" value="ECO:0007669"/>
    <property type="project" value="UniProtKB-KW"/>
</dbReference>
<dbReference type="Gene3D" id="1.20.5.420">
    <property type="entry name" value="Immunoglobulin FC, subunit C"/>
    <property type="match status" value="2"/>
</dbReference>
<dbReference type="Gene3D" id="1.10.10.1270">
    <property type="entry name" value="Sbi, C3 binding domain IV"/>
    <property type="match status" value="1"/>
</dbReference>
<dbReference type="InterPro" id="IPR009063">
    <property type="entry name" value="Ig/albumin-bd_sf"/>
</dbReference>
<dbReference type="InterPro" id="IPR021657">
    <property type="entry name" value="IgG-binding_Sbi_dom_IV"/>
</dbReference>
<dbReference type="InterPro" id="IPR003132">
    <property type="entry name" value="Protein_A_Ig-bd"/>
</dbReference>
<dbReference type="InterPro" id="IPR041909">
    <property type="entry name" value="Sbi_C3_db_domIV"/>
</dbReference>
<dbReference type="Pfam" id="PF02216">
    <property type="entry name" value="B"/>
    <property type="match status" value="2"/>
</dbReference>
<dbReference type="Pfam" id="PF11621">
    <property type="entry name" value="Sbi-IV"/>
    <property type="match status" value="1"/>
</dbReference>
<dbReference type="SUPFAM" id="SSF46997">
    <property type="entry name" value="Bacterial immunoglobulin/albumin-binding domains"/>
    <property type="match status" value="2"/>
</dbReference>
<protein>
    <recommendedName>
        <fullName>Immunoglobulin-binding protein Sbi</fullName>
    </recommendedName>
</protein>
<evidence type="ECO:0000250" key="1">
    <source>
        <dbReference type="UniProtKB" id="A6QJQ7"/>
    </source>
</evidence>
<evidence type="ECO:0000250" key="2">
    <source>
        <dbReference type="UniProtKB" id="Q931F4"/>
    </source>
</evidence>
<evidence type="ECO:0000255" key="3"/>
<evidence type="ECO:0000256" key="4">
    <source>
        <dbReference type="SAM" id="MobiDB-lite"/>
    </source>
</evidence>
<evidence type="ECO:0000305" key="5"/>
<organism>
    <name type="scientific">Staphylococcus aureus (strain JH1)</name>
    <dbReference type="NCBI Taxonomy" id="359787"/>
    <lineage>
        <taxon>Bacteria</taxon>
        <taxon>Bacillati</taxon>
        <taxon>Bacillota</taxon>
        <taxon>Bacilli</taxon>
        <taxon>Bacillales</taxon>
        <taxon>Staphylococcaceae</taxon>
        <taxon>Staphylococcus</taxon>
    </lineage>
</organism>
<accession>A6U4E8</accession>
<feature type="signal peptide" evidence="3">
    <location>
        <begin position="1"/>
        <end position="29"/>
    </location>
</feature>
<feature type="chain" id="PRO_5000257123" description="Immunoglobulin-binding protein Sbi">
    <location>
        <begin position="30"/>
        <end position="436"/>
    </location>
</feature>
<feature type="repeat" description="B 1">
    <location>
        <begin position="43"/>
        <end position="94"/>
    </location>
</feature>
<feature type="repeat" description="B 2">
    <location>
        <begin position="95"/>
        <end position="148"/>
    </location>
</feature>
<feature type="repeat" description="2-1">
    <location>
        <begin position="267"/>
        <end position="271"/>
    </location>
</feature>
<feature type="repeat" description="2-2">
    <location>
        <begin position="272"/>
        <end position="276"/>
    </location>
</feature>
<feature type="repeat" description="2-3">
    <location>
        <begin position="277"/>
        <end position="281"/>
    </location>
</feature>
<feature type="repeat" description="2-4">
    <location>
        <begin position="282"/>
        <end position="286"/>
    </location>
</feature>
<feature type="repeat" description="2-5">
    <location>
        <begin position="287"/>
        <end position="291"/>
    </location>
</feature>
<feature type="repeat" description="2-6">
    <location>
        <begin position="292"/>
        <end position="296"/>
    </location>
</feature>
<feature type="repeat" description="2-7">
    <location>
        <begin position="297"/>
        <end position="301"/>
    </location>
</feature>
<feature type="repeat" description="2-8">
    <location>
        <begin position="302"/>
        <end position="306"/>
    </location>
</feature>
<feature type="region of interest" description="Sbi-I">
    <location>
        <begin position="42"/>
        <end position="94"/>
    </location>
</feature>
<feature type="region of interest" description="Sbi-II">
    <location>
        <begin position="103"/>
        <end position="153"/>
    </location>
</feature>
<feature type="region of interest" description="Sbi-III">
    <location>
        <begin position="154"/>
        <end position="195"/>
    </location>
</feature>
<feature type="region of interest" description="Sbi-IV">
    <location>
        <begin position="196"/>
        <end position="253"/>
    </location>
</feature>
<feature type="region of interest" description="8 X 5 AA tandem repeat of P-[KQ]-[AISV]-[EKQ]-[AKLSV]">
    <location>
        <begin position="267"/>
        <end position="306"/>
    </location>
</feature>
<feature type="region of interest" description="Disordered" evidence="4">
    <location>
        <begin position="267"/>
        <end position="295"/>
    </location>
</feature>